<comment type="similarity">
    <text evidence="1">Belongs to the bacterial ribosomal protein bL35 family.</text>
</comment>
<dbReference type="EMBL" id="CP000750">
    <property type="protein sequence ID" value="ABS04632.1"/>
    <property type="molecule type" value="Genomic_DNA"/>
</dbReference>
<dbReference type="RefSeq" id="WP_012087115.1">
    <property type="nucleotide sequence ID" value="NC_009664.2"/>
</dbReference>
<dbReference type="SMR" id="A6WCU3"/>
<dbReference type="STRING" id="266940.Krad_3168"/>
<dbReference type="KEGG" id="kra:Krad_3168"/>
<dbReference type="eggNOG" id="COG0291">
    <property type="taxonomic scope" value="Bacteria"/>
</dbReference>
<dbReference type="HOGENOM" id="CLU_169643_4_2_11"/>
<dbReference type="OrthoDB" id="9804851at2"/>
<dbReference type="Proteomes" id="UP000001116">
    <property type="component" value="Chromosome"/>
</dbReference>
<dbReference type="GO" id="GO:0022625">
    <property type="term" value="C:cytosolic large ribosomal subunit"/>
    <property type="evidence" value="ECO:0007669"/>
    <property type="project" value="TreeGrafter"/>
</dbReference>
<dbReference type="GO" id="GO:0003735">
    <property type="term" value="F:structural constituent of ribosome"/>
    <property type="evidence" value="ECO:0007669"/>
    <property type="project" value="InterPro"/>
</dbReference>
<dbReference type="GO" id="GO:0006412">
    <property type="term" value="P:translation"/>
    <property type="evidence" value="ECO:0007669"/>
    <property type="project" value="UniProtKB-UniRule"/>
</dbReference>
<dbReference type="FunFam" id="4.10.410.60:FF:000001">
    <property type="entry name" value="50S ribosomal protein L35"/>
    <property type="match status" value="1"/>
</dbReference>
<dbReference type="Gene3D" id="4.10.410.60">
    <property type="match status" value="1"/>
</dbReference>
<dbReference type="HAMAP" id="MF_00514">
    <property type="entry name" value="Ribosomal_bL35"/>
    <property type="match status" value="1"/>
</dbReference>
<dbReference type="InterPro" id="IPR001706">
    <property type="entry name" value="Ribosomal_bL35"/>
</dbReference>
<dbReference type="InterPro" id="IPR021137">
    <property type="entry name" value="Ribosomal_bL35-like"/>
</dbReference>
<dbReference type="InterPro" id="IPR018265">
    <property type="entry name" value="Ribosomal_bL35_CS"/>
</dbReference>
<dbReference type="InterPro" id="IPR037229">
    <property type="entry name" value="Ribosomal_bL35_sf"/>
</dbReference>
<dbReference type="NCBIfam" id="TIGR00001">
    <property type="entry name" value="rpmI_bact"/>
    <property type="match status" value="1"/>
</dbReference>
<dbReference type="PANTHER" id="PTHR33343">
    <property type="entry name" value="54S RIBOSOMAL PROTEIN BL35M"/>
    <property type="match status" value="1"/>
</dbReference>
<dbReference type="PANTHER" id="PTHR33343:SF1">
    <property type="entry name" value="LARGE RIBOSOMAL SUBUNIT PROTEIN BL35M"/>
    <property type="match status" value="1"/>
</dbReference>
<dbReference type="Pfam" id="PF01632">
    <property type="entry name" value="Ribosomal_L35p"/>
    <property type="match status" value="1"/>
</dbReference>
<dbReference type="PRINTS" id="PR00064">
    <property type="entry name" value="RIBOSOMALL35"/>
</dbReference>
<dbReference type="SUPFAM" id="SSF143034">
    <property type="entry name" value="L35p-like"/>
    <property type="match status" value="1"/>
</dbReference>
<dbReference type="PROSITE" id="PS00936">
    <property type="entry name" value="RIBOSOMAL_L35"/>
    <property type="match status" value="1"/>
</dbReference>
<name>RL35_KINRD</name>
<organism>
    <name type="scientific">Kineococcus radiotolerans (strain ATCC BAA-149 / DSM 14245 / SRS30216)</name>
    <dbReference type="NCBI Taxonomy" id="266940"/>
    <lineage>
        <taxon>Bacteria</taxon>
        <taxon>Bacillati</taxon>
        <taxon>Actinomycetota</taxon>
        <taxon>Actinomycetes</taxon>
        <taxon>Kineosporiales</taxon>
        <taxon>Kineosporiaceae</taxon>
        <taxon>Kineococcus</taxon>
    </lineage>
</organism>
<proteinExistence type="inferred from homology"/>
<keyword id="KW-1185">Reference proteome</keyword>
<keyword id="KW-0687">Ribonucleoprotein</keyword>
<keyword id="KW-0689">Ribosomal protein</keyword>
<evidence type="ECO:0000255" key="1">
    <source>
        <dbReference type="HAMAP-Rule" id="MF_00514"/>
    </source>
</evidence>
<evidence type="ECO:0000305" key="2"/>
<gene>
    <name evidence="1" type="primary">rpmI</name>
    <name type="ordered locus">Krad_3168</name>
</gene>
<accession>A6WCU3</accession>
<protein>
    <recommendedName>
        <fullName evidence="1">Large ribosomal subunit protein bL35</fullName>
    </recommendedName>
    <alternativeName>
        <fullName evidence="2">50S ribosomal protein L35</fullName>
    </alternativeName>
</protein>
<sequence>MPKNKTHSGAKKRFRITGSGKVMREQANKRHLLEVKSSKRTRRLSVDQVVSPADVKKIKKLLGR</sequence>
<reference key="1">
    <citation type="journal article" date="2008" name="PLoS ONE">
        <title>Survival in nuclear waste, extreme resistance, and potential applications gleaned from the genome sequence of Kineococcus radiotolerans SRS30216.</title>
        <authorList>
            <person name="Bagwell C.E."/>
            <person name="Bhat S."/>
            <person name="Hawkins G.M."/>
            <person name="Smith B.W."/>
            <person name="Biswas T."/>
            <person name="Hoover T.R."/>
            <person name="Saunders E."/>
            <person name="Han C.S."/>
            <person name="Tsodikov O.V."/>
            <person name="Shimkets L.J."/>
        </authorList>
    </citation>
    <scope>NUCLEOTIDE SEQUENCE [LARGE SCALE GENOMIC DNA]</scope>
    <source>
        <strain>ATCC BAA-149 / DSM 14245 / SRS30216</strain>
    </source>
</reference>
<feature type="chain" id="PRO_1000081613" description="Large ribosomal subunit protein bL35">
    <location>
        <begin position="1"/>
        <end position="64"/>
    </location>
</feature>